<feature type="chain" id="PRO_0000073335" description="ATP synthase gamma chain">
    <location>
        <begin position="1"/>
        <end position="289"/>
    </location>
</feature>
<keyword id="KW-0066">ATP synthesis</keyword>
<keyword id="KW-0997">Cell inner membrane</keyword>
<keyword id="KW-1003">Cell membrane</keyword>
<keyword id="KW-0139">CF(1)</keyword>
<keyword id="KW-0375">Hydrogen ion transport</keyword>
<keyword id="KW-0406">Ion transport</keyword>
<keyword id="KW-0472">Membrane</keyword>
<keyword id="KW-1185">Reference proteome</keyword>
<keyword id="KW-0813">Transport</keyword>
<proteinExistence type="inferred from homology"/>
<name>ATPG_PASMU</name>
<protein>
    <recommendedName>
        <fullName evidence="1">ATP synthase gamma chain</fullName>
    </recommendedName>
    <alternativeName>
        <fullName evidence="1">ATP synthase F1 sector gamma subunit</fullName>
    </alternativeName>
    <alternativeName>
        <fullName evidence="1">F-ATPase gamma subunit</fullName>
    </alternativeName>
</protein>
<dbReference type="EMBL" id="AF237922">
    <property type="protein sequence ID" value="AAF68408.1"/>
    <property type="molecule type" value="Genomic_DNA"/>
</dbReference>
<dbReference type="EMBL" id="AE004439">
    <property type="protein sequence ID" value="AAK03577.1"/>
    <property type="molecule type" value="Genomic_DNA"/>
</dbReference>
<dbReference type="RefSeq" id="WP_005718053.1">
    <property type="nucleotide sequence ID" value="NC_002663.1"/>
</dbReference>
<dbReference type="SMR" id="Q9L6B6"/>
<dbReference type="STRING" id="272843.PM1493"/>
<dbReference type="EnsemblBacteria" id="AAK03577">
    <property type="protein sequence ID" value="AAK03577"/>
    <property type="gene ID" value="PM1493"/>
</dbReference>
<dbReference type="GeneID" id="77206947"/>
<dbReference type="KEGG" id="pmu:PM1493"/>
<dbReference type="HOGENOM" id="CLU_050669_0_1_6"/>
<dbReference type="OrthoDB" id="9812769at2"/>
<dbReference type="Proteomes" id="UP000000809">
    <property type="component" value="Chromosome"/>
</dbReference>
<dbReference type="GO" id="GO:0005886">
    <property type="term" value="C:plasma membrane"/>
    <property type="evidence" value="ECO:0007669"/>
    <property type="project" value="UniProtKB-SubCell"/>
</dbReference>
<dbReference type="GO" id="GO:0045259">
    <property type="term" value="C:proton-transporting ATP synthase complex"/>
    <property type="evidence" value="ECO:0007669"/>
    <property type="project" value="UniProtKB-KW"/>
</dbReference>
<dbReference type="GO" id="GO:0005524">
    <property type="term" value="F:ATP binding"/>
    <property type="evidence" value="ECO:0007669"/>
    <property type="project" value="UniProtKB-UniRule"/>
</dbReference>
<dbReference type="GO" id="GO:0046933">
    <property type="term" value="F:proton-transporting ATP synthase activity, rotational mechanism"/>
    <property type="evidence" value="ECO:0007669"/>
    <property type="project" value="UniProtKB-UniRule"/>
</dbReference>
<dbReference type="GO" id="GO:0042777">
    <property type="term" value="P:proton motive force-driven plasma membrane ATP synthesis"/>
    <property type="evidence" value="ECO:0007669"/>
    <property type="project" value="UniProtKB-UniRule"/>
</dbReference>
<dbReference type="CDD" id="cd12151">
    <property type="entry name" value="F1-ATPase_gamma"/>
    <property type="match status" value="1"/>
</dbReference>
<dbReference type="FunFam" id="1.10.287.80:FF:000005">
    <property type="entry name" value="ATP synthase gamma chain"/>
    <property type="match status" value="1"/>
</dbReference>
<dbReference type="FunFam" id="3.40.1380.10:FF:000006">
    <property type="entry name" value="ATP synthase gamma chain"/>
    <property type="match status" value="1"/>
</dbReference>
<dbReference type="Gene3D" id="3.40.1380.10">
    <property type="match status" value="1"/>
</dbReference>
<dbReference type="Gene3D" id="1.10.287.80">
    <property type="entry name" value="ATP synthase, gamma subunit, helix hairpin domain"/>
    <property type="match status" value="2"/>
</dbReference>
<dbReference type="HAMAP" id="MF_00815">
    <property type="entry name" value="ATP_synth_gamma_bact"/>
    <property type="match status" value="1"/>
</dbReference>
<dbReference type="InterPro" id="IPR035968">
    <property type="entry name" value="ATP_synth_F1_ATPase_gsu"/>
</dbReference>
<dbReference type="InterPro" id="IPR000131">
    <property type="entry name" value="ATP_synth_F1_gsu"/>
</dbReference>
<dbReference type="InterPro" id="IPR023632">
    <property type="entry name" value="ATP_synth_F1_gsu_CS"/>
</dbReference>
<dbReference type="NCBIfam" id="TIGR01146">
    <property type="entry name" value="ATPsyn_F1gamma"/>
    <property type="match status" value="1"/>
</dbReference>
<dbReference type="NCBIfam" id="NF004144">
    <property type="entry name" value="PRK05621.1-1"/>
    <property type="match status" value="1"/>
</dbReference>
<dbReference type="PANTHER" id="PTHR11693">
    <property type="entry name" value="ATP SYNTHASE GAMMA CHAIN"/>
    <property type="match status" value="1"/>
</dbReference>
<dbReference type="PANTHER" id="PTHR11693:SF22">
    <property type="entry name" value="ATP SYNTHASE SUBUNIT GAMMA, MITOCHONDRIAL"/>
    <property type="match status" value="1"/>
</dbReference>
<dbReference type="Pfam" id="PF00231">
    <property type="entry name" value="ATP-synt"/>
    <property type="match status" value="1"/>
</dbReference>
<dbReference type="PRINTS" id="PR00126">
    <property type="entry name" value="ATPASEGAMMA"/>
</dbReference>
<dbReference type="SUPFAM" id="SSF52943">
    <property type="entry name" value="ATP synthase (F1-ATPase), gamma subunit"/>
    <property type="match status" value="1"/>
</dbReference>
<dbReference type="PROSITE" id="PS00153">
    <property type="entry name" value="ATPASE_GAMMA"/>
    <property type="match status" value="1"/>
</dbReference>
<organism>
    <name type="scientific">Pasteurella multocida (strain Pm70)</name>
    <dbReference type="NCBI Taxonomy" id="272843"/>
    <lineage>
        <taxon>Bacteria</taxon>
        <taxon>Pseudomonadati</taxon>
        <taxon>Pseudomonadota</taxon>
        <taxon>Gammaproteobacteria</taxon>
        <taxon>Pasteurellales</taxon>
        <taxon>Pasteurellaceae</taxon>
        <taxon>Pasteurella</taxon>
    </lineage>
</organism>
<evidence type="ECO:0000255" key="1">
    <source>
        <dbReference type="HAMAP-Rule" id="MF_00815"/>
    </source>
</evidence>
<reference key="1">
    <citation type="journal article" date="2000" name="Microb. Pathog.">
        <title>Identification of Pasteurella multocida virulence genes in a septicemic mouse model using signature-tagged mutagenesis.</title>
        <authorList>
            <person name="Fuller T.E."/>
            <person name="Kennedy M.J."/>
            <person name="Lowery D.E."/>
        </authorList>
    </citation>
    <scope>NUCLEOTIDE SEQUENCE [GENOMIC DNA]</scope>
</reference>
<reference key="2">
    <citation type="journal article" date="2001" name="Proc. Natl. Acad. Sci. U.S.A.">
        <title>Complete genomic sequence of Pasteurella multocida Pm70.</title>
        <authorList>
            <person name="May B.J."/>
            <person name="Zhang Q."/>
            <person name="Li L.L."/>
            <person name="Paustian M.L."/>
            <person name="Whittam T.S."/>
            <person name="Kapur V."/>
        </authorList>
    </citation>
    <scope>NUCLEOTIDE SEQUENCE [LARGE SCALE GENOMIC DNA]</scope>
    <source>
        <strain>Pm70</strain>
    </source>
</reference>
<sequence>MAGAKEIRTKIASVKSTQKITKAMEMVAASKMRKTQERMSSSRPYSETIRNVISHVSKATIGYKHPFLVDREVKKVGMIVVSTDRGLCGGLNVNLFKTVLNEMKEWKEKDVSVQLSLIGSKSINFFQSLGIKILTQDSGIGDTPSVEQLIGSVNSMIDAYKKGEVDVVYLVYNKFINTMSQKPVLEKLIPLPELDNDELGERKQVWDYIYEPDAKVLLDNLLVRYLESQVYQAAVENLASEQAARMVAMKAATDNAGNLINELQLVYNKARQASITNELNEIVAGAAAI</sequence>
<gene>
    <name evidence="1" type="primary">atpG</name>
    <name type="ordered locus">PM1493</name>
</gene>
<comment type="function">
    <text evidence="1">Produces ATP from ADP in the presence of a proton gradient across the membrane. The gamma chain is believed to be important in regulating ATPase activity and the flow of protons through the CF(0) complex.</text>
</comment>
<comment type="subunit">
    <text evidence="1">F-type ATPases have 2 components, CF(1) - the catalytic core - and CF(0) - the membrane proton channel. CF(1) has five subunits: alpha(3), beta(3), gamma(1), delta(1), epsilon(1). CF(0) has three main subunits: a, b and c.</text>
</comment>
<comment type="subcellular location">
    <subcellularLocation>
        <location evidence="1">Cell inner membrane</location>
        <topology evidence="1">Peripheral membrane protein</topology>
    </subcellularLocation>
</comment>
<comment type="similarity">
    <text evidence="1">Belongs to the ATPase gamma chain family.</text>
</comment>
<accession>Q9L6B6</accession>